<accession>B3QR84</accession>
<reference key="1">
    <citation type="submission" date="2008-06" db="EMBL/GenBank/DDBJ databases">
        <title>Complete sequence of Chlorobaculum parvum NCIB 8327.</title>
        <authorList>
            <consortium name="US DOE Joint Genome Institute"/>
            <person name="Lucas S."/>
            <person name="Copeland A."/>
            <person name="Lapidus A."/>
            <person name="Glavina del Rio T."/>
            <person name="Dalin E."/>
            <person name="Tice H."/>
            <person name="Bruce D."/>
            <person name="Goodwin L."/>
            <person name="Pitluck S."/>
            <person name="Schmutz J."/>
            <person name="Larimer F."/>
            <person name="Land M."/>
            <person name="Hauser L."/>
            <person name="Kyrpides N."/>
            <person name="Mikhailova N."/>
            <person name="Zhao F."/>
            <person name="Li T."/>
            <person name="Liu Z."/>
            <person name="Overmann J."/>
            <person name="Bryant D.A."/>
            <person name="Richardson P."/>
        </authorList>
    </citation>
    <scope>NUCLEOTIDE SEQUENCE [LARGE SCALE GENOMIC DNA]</scope>
    <source>
        <strain>DSM 263 / NCIMB 8327</strain>
    </source>
</reference>
<gene>
    <name evidence="1" type="primary">rpsS</name>
    <name type="ordered locus">Cpar_0181</name>
</gene>
<feature type="chain" id="PRO_1000127946" description="Small ribosomal subunit protein uS19">
    <location>
        <begin position="1"/>
        <end position="98"/>
    </location>
</feature>
<protein>
    <recommendedName>
        <fullName evidence="1">Small ribosomal subunit protein uS19</fullName>
    </recommendedName>
    <alternativeName>
        <fullName evidence="2">30S ribosomal protein S19</fullName>
    </alternativeName>
</protein>
<name>RS19_CHLP8</name>
<dbReference type="EMBL" id="CP001099">
    <property type="protein sequence ID" value="ACF10608.1"/>
    <property type="molecule type" value="Genomic_DNA"/>
</dbReference>
<dbReference type="RefSeq" id="WP_012501443.1">
    <property type="nucleotide sequence ID" value="NC_011027.1"/>
</dbReference>
<dbReference type="SMR" id="B3QR84"/>
<dbReference type="STRING" id="517417.Cpar_0181"/>
<dbReference type="KEGG" id="cpc:Cpar_0181"/>
<dbReference type="eggNOG" id="COG0185">
    <property type="taxonomic scope" value="Bacteria"/>
</dbReference>
<dbReference type="HOGENOM" id="CLU_144911_0_1_10"/>
<dbReference type="OrthoDB" id="9797833at2"/>
<dbReference type="Proteomes" id="UP000008811">
    <property type="component" value="Chromosome"/>
</dbReference>
<dbReference type="GO" id="GO:0005737">
    <property type="term" value="C:cytoplasm"/>
    <property type="evidence" value="ECO:0007669"/>
    <property type="project" value="UniProtKB-ARBA"/>
</dbReference>
<dbReference type="GO" id="GO:0015935">
    <property type="term" value="C:small ribosomal subunit"/>
    <property type="evidence" value="ECO:0007669"/>
    <property type="project" value="InterPro"/>
</dbReference>
<dbReference type="GO" id="GO:0019843">
    <property type="term" value="F:rRNA binding"/>
    <property type="evidence" value="ECO:0007669"/>
    <property type="project" value="UniProtKB-UniRule"/>
</dbReference>
<dbReference type="GO" id="GO:0003735">
    <property type="term" value="F:structural constituent of ribosome"/>
    <property type="evidence" value="ECO:0007669"/>
    <property type="project" value="InterPro"/>
</dbReference>
<dbReference type="GO" id="GO:0000028">
    <property type="term" value="P:ribosomal small subunit assembly"/>
    <property type="evidence" value="ECO:0007669"/>
    <property type="project" value="TreeGrafter"/>
</dbReference>
<dbReference type="GO" id="GO:0006412">
    <property type="term" value="P:translation"/>
    <property type="evidence" value="ECO:0007669"/>
    <property type="project" value="UniProtKB-UniRule"/>
</dbReference>
<dbReference type="FunFam" id="3.30.860.10:FF:000001">
    <property type="entry name" value="30S ribosomal protein S19"/>
    <property type="match status" value="1"/>
</dbReference>
<dbReference type="Gene3D" id="3.30.860.10">
    <property type="entry name" value="30s Ribosomal Protein S19, Chain A"/>
    <property type="match status" value="1"/>
</dbReference>
<dbReference type="HAMAP" id="MF_00531">
    <property type="entry name" value="Ribosomal_uS19"/>
    <property type="match status" value="1"/>
</dbReference>
<dbReference type="InterPro" id="IPR002222">
    <property type="entry name" value="Ribosomal_uS19"/>
</dbReference>
<dbReference type="InterPro" id="IPR005732">
    <property type="entry name" value="Ribosomal_uS19_bac-type"/>
</dbReference>
<dbReference type="InterPro" id="IPR020934">
    <property type="entry name" value="Ribosomal_uS19_CS"/>
</dbReference>
<dbReference type="InterPro" id="IPR023575">
    <property type="entry name" value="Ribosomal_uS19_SF"/>
</dbReference>
<dbReference type="NCBIfam" id="TIGR01050">
    <property type="entry name" value="rpsS_bact"/>
    <property type="match status" value="1"/>
</dbReference>
<dbReference type="PANTHER" id="PTHR11880">
    <property type="entry name" value="RIBOSOMAL PROTEIN S19P FAMILY MEMBER"/>
    <property type="match status" value="1"/>
</dbReference>
<dbReference type="PANTHER" id="PTHR11880:SF8">
    <property type="entry name" value="SMALL RIBOSOMAL SUBUNIT PROTEIN US19M"/>
    <property type="match status" value="1"/>
</dbReference>
<dbReference type="Pfam" id="PF00203">
    <property type="entry name" value="Ribosomal_S19"/>
    <property type="match status" value="1"/>
</dbReference>
<dbReference type="PIRSF" id="PIRSF002144">
    <property type="entry name" value="Ribosomal_S19"/>
    <property type="match status" value="1"/>
</dbReference>
<dbReference type="PRINTS" id="PR00975">
    <property type="entry name" value="RIBOSOMALS19"/>
</dbReference>
<dbReference type="SUPFAM" id="SSF54570">
    <property type="entry name" value="Ribosomal protein S19"/>
    <property type="match status" value="1"/>
</dbReference>
<dbReference type="PROSITE" id="PS00323">
    <property type="entry name" value="RIBOSOMAL_S19"/>
    <property type="match status" value="1"/>
</dbReference>
<organism>
    <name type="scientific">Chlorobaculum parvum (strain DSM 263 / NCIMB 8327)</name>
    <name type="common">Chlorobium vibrioforme subsp. thiosulfatophilum</name>
    <dbReference type="NCBI Taxonomy" id="517417"/>
    <lineage>
        <taxon>Bacteria</taxon>
        <taxon>Pseudomonadati</taxon>
        <taxon>Chlorobiota</taxon>
        <taxon>Chlorobiia</taxon>
        <taxon>Chlorobiales</taxon>
        <taxon>Chlorobiaceae</taxon>
        <taxon>Chlorobaculum</taxon>
    </lineage>
</organism>
<comment type="function">
    <text evidence="1">Protein S19 forms a complex with S13 that binds strongly to the 16S ribosomal RNA.</text>
</comment>
<comment type="similarity">
    <text evidence="1">Belongs to the universal ribosomal protein uS19 family.</text>
</comment>
<proteinExistence type="inferred from homology"/>
<keyword id="KW-0687">Ribonucleoprotein</keyword>
<keyword id="KW-0689">Ribosomal protein</keyword>
<keyword id="KW-0694">RNA-binding</keyword>
<keyword id="KW-0699">rRNA-binding</keyword>
<sequence>MPRSLKKGPFIEFKLEKRILDMNSKGERKVVKTWSRSSMISPDFVGHTVAVHNGKTHVPVYVTENMVGHKLGEFAPTRLYRGHAGGKAEKGGSAPRKK</sequence>
<evidence type="ECO:0000255" key="1">
    <source>
        <dbReference type="HAMAP-Rule" id="MF_00531"/>
    </source>
</evidence>
<evidence type="ECO:0000305" key="2"/>